<proteinExistence type="inferred from homology"/>
<sequence length="76" mass="8899">MARFFRRRKFCRFTAEGVKEIDFKDLNTLKAYISETGKIVPSRITGTKARYQRQLATAIKRARYLALLPYTDSHGR</sequence>
<organism>
    <name type="scientific">Azotobacter vinelandii (strain DJ / ATCC BAA-1303)</name>
    <dbReference type="NCBI Taxonomy" id="322710"/>
    <lineage>
        <taxon>Bacteria</taxon>
        <taxon>Pseudomonadati</taxon>
        <taxon>Pseudomonadota</taxon>
        <taxon>Gammaproteobacteria</taxon>
        <taxon>Pseudomonadales</taxon>
        <taxon>Pseudomonadaceae</taxon>
        <taxon>Azotobacter</taxon>
    </lineage>
</organism>
<dbReference type="EMBL" id="CP001157">
    <property type="protein sequence ID" value="ACO77011.1"/>
    <property type="molecule type" value="Genomic_DNA"/>
</dbReference>
<dbReference type="RefSeq" id="WP_012699436.1">
    <property type="nucleotide sequence ID" value="NZ_CP144736.1"/>
</dbReference>
<dbReference type="SMR" id="C1DLR3"/>
<dbReference type="STRING" id="322710.Avin_07650"/>
<dbReference type="EnsemblBacteria" id="ACO77011">
    <property type="protein sequence ID" value="ACO77011"/>
    <property type="gene ID" value="Avin_07650"/>
</dbReference>
<dbReference type="GeneID" id="88184162"/>
<dbReference type="KEGG" id="avn:Avin_07650"/>
<dbReference type="eggNOG" id="COG0238">
    <property type="taxonomic scope" value="Bacteria"/>
</dbReference>
<dbReference type="HOGENOM" id="CLU_148710_2_3_6"/>
<dbReference type="OrthoDB" id="9812008at2"/>
<dbReference type="Proteomes" id="UP000002424">
    <property type="component" value="Chromosome"/>
</dbReference>
<dbReference type="GO" id="GO:0022627">
    <property type="term" value="C:cytosolic small ribosomal subunit"/>
    <property type="evidence" value="ECO:0007669"/>
    <property type="project" value="TreeGrafter"/>
</dbReference>
<dbReference type="GO" id="GO:0070181">
    <property type="term" value="F:small ribosomal subunit rRNA binding"/>
    <property type="evidence" value="ECO:0007669"/>
    <property type="project" value="TreeGrafter"/>
</dbReference>
<dbReference type="GO" id="GO:0003735">
    <property type="term" value="F:structural constituent of ribosome"/>
    <property type="evidence" value="ECO:0007669"/>
    <property type="project" value="InterPro"/>
</dbReference>
<dbReference type="GO" id="GO:0006412">
    <property type="term" value="P:translation"/>
    <property type="evidence" value="ECO:0007669"/>
    <property type="project" value="UniProtKB-UniRule"/>
</dbReference>
<dbReference type="FunFam" id="4.10.640.10:FF:000001">
    <property type="entry name" value="30S ribosomal protein S18"/>
    <property type="match status" value="1"/>
</dbReference>
<dbReference type="Gene3D" id="4.10.640.10">
    <property type="entry name" value="Ribosomal protein S18"/>
    <property type="match status" value="1"/>
</dbReference>
<dbReference type="HAMAP" id="MF_00270">
    <property type="entry name" value="Ribosomal_bS18"/>
    <property type="match status" value="1"/>
</dbReference>
<dbReference type="InterPro" id="IPR001648">
    <property type="entry name" value="Ribosomal_bS18"/>
</dbReference>
<dbReference type="InterPro" id="IPR018275">
    <property type="entry name" value="Ribosomal_bS18_CS"/>
</dbReference>
<dbReference type="InterPro" id="IPR036870">
    <property type="entry name" value="Ribosomal_bS18_sf"/>
</dbReference>
<dbReference type="NCBIfam" id="TIGR00165">
    <property type="entry name" value="S18"/>
    <property type="match status" value="1"/>
</dbReference>
<dbReference type="PANTHER" id="PTHR13479">
    <property type="entry name" value="30S RIBOSOMAL PROTEIN S18"/>
    <property type="match status" value="1"/>
</dbReference>
<dbReference type="PANTHER" id="PTHR13479:SF40">
    <property type="entry name" value="SMALL RIBOSOMAL SUBUNIT PROTEIN BS18M"/>
    <property type="match status" value="1"/>
</dbReference>
<dbReference type="Pfam" id="PF01084">
    <property type="entry name" value="Ribosomal_S18"/>
    <property type="match status" value="1"/>
</dbReference>
<dbReference type="PRINTS" id="PR00974">
    <property type="entry name" value="RIBOSOMALS18"/>
</dbReference>
<dbReference type="SUPFAM" id="SSF46911">
    <property type="entry name" value="Ribosomal protein S18"/>
    <property type="match status" value="1"/>
</dbReference>
<dbReference type="PROSITE" id="PS00057">
    <property type="entry name" value="RIBOSOMAL_S18"/>
    <property type="match status" value="1"/>
</dbReference>
<feature type="chain" id="PRO_1000204719" description="Small ribosomal subunit protein bS18">
    <location>
        <begin position="1"/>
        <end position="76"/>
    </location>
</feature>
<gene>
    <name evidence="1" type="primary">rpsR</name>
    <name type="ordered locus">Avin_07650</name>
</gene>
<keyword id="KW-0687">Ribonucleoprotein</keyword>
<keyword id="KW-0689">Ribosomal protein</keyword>
<keyword id="KW-0694">RNA-binding</keyword>
<keyword id="KW-0699">rRNA-binding</keyword>
<name>RS18_AZOVD</name>
<evidence type="ECO:0000255" key="1">
    <source>
        <dbReference type="HAMAP-Rule" id="MF_00270"/>
    </source>
</evidence>
<evidence type="ECO:0000305" key="2"/>
<comment type="function">
    <text evidence="1">Binds as a heterodimer with protein bS6 to the central domain of the 16S rRNA, where it helps stabilize the platform of the 30S subunit.</text>
</comment>
<comment type="subunit">
    <text evidence="1">Part of the 30S ribosomal subunit. Forms a tight heterodimer with protein bS6.</text>
</comment>
<comment type="similarity">
    <text evidence="1">Belongs to the bacterial ribosomal protein bS18 family.</text>
</comment>
<accession>C1DLR3</accession>
<reference key="1">
    <citation type="journal article" date="2009" name="J. Bacteriol.">
        <title>Genome sequence of Azotobacter vinelandii, an obligate aerobe specialized to support diverse anaerobic metabolic processes.</title>
        <authorList>
            <person name="Setubal J.C."/>
            <person name="Dos Santos P."/>
            <person name="Goldman B.S."/>
            <person name="Ertesvaag H."/>
            <person name="Espin G."/>
            <person name="Rubio L.M."/>
            <person name="Valla S."/>
            <person name="Almeida N.F."/>
            <person name="Balasubramanian D."/>
            <person name="Cromes L."/>
            <person name="Curatti L."/>
            <person name="Du Z."/>
            <person name="Godsy E."/>
            <person name="Goodner B."/>
            <person name="Hellner-Burris K."/>
            <person name="Hernandez J.A."/>
            <person name="Houmiel K."/>
            <person name="Imperial J."/>
            <person name="Kennedy C."/>
            <person name="Larson T.J."/>
            <person name="Latreille P."/>
            <person name="Ligon L.S."/>
            <person name="Lu J."/>
            <person name="Maerk M."/>
            <person name="Miller N.M."/>
            <person name="Norton S."/>
            <person name="O'Carroll I.P."/>
            <person name="Paulsen I."/>
            <person name="Raulfs E.C."/>
            <person name="Roemer R."/>
            <person name="Rosser J."/>
            <person name="Segura D."/>
            <person name="Slater S."/>
            <person name="Stricklin S.L."/>
            <person name="Studholme D.J."/>
            <person name="Sun J."/>
            <person name="Viana C.J."/>
            <person name="Wallin E."/>
            <person name="Wang B."/>
            <person name="Wheeler C."/>
            <person name="Zhu H."/>
            <person name="Dean D.R."/>
            <person name="Dixon R."/>
            <person name="Wood D."/>
        </authorList>
    </citation>
    <scope>NUCLEOTIDE SEQUENCE [LARGE SCALE GENOMIC DNA]</scope>
    <source>
        <strain>DJ / ATCC BAA-1303</strain>
    </source>
</reference>
<protein>
    <recommendedName>
        <fullName evidence="1">Small ribosomal subunit protein bS18</fullName>
    </recommendedName>
    <alternativeName>
        <fullName evidence="2">30S ribosomal protein S18</fullName>
    </alternativeName>
</protein>